<sequence>MAPCHIRKYQESDRQWVVGLLSRGMAEHAPATFRQLLKLPRTLILLLGGPLALLLVSGSWLLALVFSISLFPALWFLAKKPWTEYVDMTLCTDMSDITKSYLSERGSCFWVAESEEKVVGMVGALPVDDPTLREKRLQLFHLFVDSEHRRQGIAKALVRTVLQFARDQGYSEVILDTGTIQLSAMALYQSMGFKKTGQSFFCVWARLVALHTVHFIYHLPSSKVGSL</sequence>
<feature type="chain" id="PRO_0000284684" description="N-acetyltransferase 8">
    <location>
        <begin position="1"/>
        <end position="227"/>
    </location>
</feature>
<feature type="topological domain" description="Cytoplasmic" evidence="5">
    <location>
        <begin position="1"/>
        <end position="42"/>
    </location>
</feature>
<feature type="transmembrane region" description="Helical; Signal-anchor for type II membrane protein" evidence="2">
    <location>
        <begin position="43"/>
        <end position="63"/>
    </location>
</feature>
<feature type="topological domain" description="Lumenal" evidence="6">
    <location>
        <begin position="64"/>
        <end position="227"/>
    </location>
</feature>
<feature type="domain" description="N-acetyltransferase" evidence="3">
    <location>
        <begin position="61"/>
        <end position="220"/>
    </location>
</feature>
<feature type="sequence variant" id="VAR_053886" description="No effect on the cysteine S-conjugate N-acetyltransferase activity; dbSNP:rs13424561." evidence="6">
    <original>E</original>
    <variation>K</variation>
    <location>
        <position position="104"/>
    </location>
</feature>
<feature type="sequence variant" id="VAR_031805" description="No effect on the cysteine S-conjugate N-acetyltransferase activity; dbSNP:rs13538." evidence="4 6 11 12">
    <original>F</original>
    <variation>S</variation>
    <location>
        <position position="143"/>
    </location>
</feature>
<feature type="mutagenesis site" description="Exhibits reduced protein-lysine N6-acetyltransferase activity; when associated with A-183 and A-190." evidence="9">
    <original>R</original>
    <variation>A</variation>
    <location>
        <position position="149"/>
    </location>
</feature>
<feature type="mutagenesis site" description="Loss of the cysteine S-conjugate N-acetyltransferase activity. No effect on protein expression." evidence="6">
    <original>R</original>
    <variation>K</variation>
    <location>
        <position position="149"/>
    </location>
</feature>
<feature type="mutagenesis site" description="Exhibits reduced protein-lysine N6-acetyltransferase activity; when associated with A-149 and A-190." evidence="9">
    <original>S</original>
    <variation>A</variation>
    <location>
        <position position="183"/>
    </location>
</feature>
<feature type="mutagenesis site" description="Exhibits reduced protein-lysine N6-acetyltransferase activity; when associated with A-149 and A-183." evidence="9">
    <original>S</original>
    <variation>A</variation>
    <location>
        <position position="190"/>
    </location>
</feature>
<feature type="sequence conflict" description="In Ref. 4; CAG28538." evidence="13" ref="4">
    <original>C</original>
    <variation>R</variation>
    <location>
        <position position="202"/>
    </location>
</feature>
<feature type="sequence conflict" description="In Ref. 3; BAA34386." evidence="13" ref="3">
    <original>T</original>
    <variation>K</variation>
    <location>
        <position position="212"/>
    </location>
</feature>
<feature type="sequence conflict" description="In Ref. 5; AAH12626." evidence="13" ref="5">
    <original>L</original>
    <variation>Q</variation>
    <location>
        <position position="227"/>
    </location>
</feature>
<keyword id="KW-0012">Acyltransferase</keyword>
<keyword id="KW-0256">Endoplasmic reticulum</keyword>
<keyword id="KW-0472">Membrane</keyword>
<keyword id="KW-1267">Proteomics identification</keyword>
<keyword id="KW-1185">Reference proteome</keyword>
<keyword id="KW-0735">Signal-anchor</keyword>
<keyword id="KW-0808">Transferase</keyword>
<keyword id="KW-0812">Transmembrane</keyword>
<keyword id="KW-1133">Transmembrane helix</keyword>
<reference evidence="13 18" key="1">
    <citation type="journal article" date="1998" name="J. Hum. Genet.">
        <title>Isolation and mapping of a novel human kidney- and liver-specific gene homologous to the bacterial acetyltransferases.</title>
        <authorList>
            <person name="Ozaki K."/>
            <person name="Fujiwara T."/>
            <person name="Nakamura Y."/>
            <person name="Takahashi E."/>
        </authorList>
    </citation>
    <scope>NUCLEOTIDE SEQUENCE [MRNA]</scope>
    <scope>TISSUE SPECIFICITY</scope>
    <source>
        <tissue evidence="10">Kidney</tissue>
    </source>
</reference>
<reference evidence="13 16" key="2">
    <citation type="journal article" date="2001" name="Dev. Biol.">
        <title>Overexpression of camello, a member of a novel protein family, reduces blastomere adhesion and inhibits gastrulation in Xenopus laevis.</title>
        <authorList>
            <person name="Popsueva A.E."/>
            <person name="Luchinskaya N.N."/>
            <person name="Ludwig A.V."/>
            <person name="Zinovjeva O.Y."/>
            <person name="Poteryaev D.A."/>
            <person name="Feigelman M.M."/>
            <person name="Ponomarev M.B."/>
            <person name="Berekelya L."/>
            <person name="Belyavsky A.V."/>
        </authorList>
    </citation>
    <scope>NUCLEOTIDE SEQUENCE [MRNA]</scope>
    <scope>VARIANT SER-143</scope>
</reference>
<reference evidence="13 19" key="3">
    <citation type="submission" date="1998-11" db="EMBL/GenBank/DDBJ databases">
        <title>GLA, a kidney specific membrane protein highly expressed in renal tubular cells; possible involvement in the chronic renal failure.</title>
        <authorList>
            <person name="Yamamoto H."/>
            <person name="Takahashi M."/>
            <person name="Yoshimoto M."/>
            <person name="Hara H."/>
            <person name="Kitamura K."/>
            <person name="Nakagawa J."/>
        </authorList>
    </citation>
    <scope>NUCLEOTIDE SEQUENCE [MRNA]</scope>
    <scope>VARIANT SER-143</scope>
</reference>
<reference evidence="13 19" key="4">
    <citation type="submission" date="2004-05" db="EMBL/GenBank/DDBJ databases">
        <title>Cloning of human full open reading frames in Gateway(TM) system entry vector (pDONR201).</title>
        <authorList>
            <person name="Ebert L."/>
            <person name="Schick M."/>
            <person name="Neubert P."/>
            <person name="Schatten R."/>
            <person name="Henze S."/>
            <person name="Korn B."/>
        </authorList>
    </citation>
    <scope>NUCLEOTIDE SEQUENCE [MRNA]</scope>
    <scope>VARIANT SER-143</scope>
</reference>
<reference evidence="17" key="5">
    <citation type="journal article" date="2004" name="Genome Res.">
        <title>The status, quality, and expansion of the NIH full-length cDNA project: the Mammalian Gene Collection (MGC).</title>
        <authorList>
            <consortium name="The MGC Project Team"/>
        </authorList>
    </citation>
    <scope>NUCLEOTIDE SEQUENCE [LARGE SCALE MRNA]</scope>
    <source>
        <tissue evidence="17">Kidney</tissue>
    </source>
</reference>
<reference key="6">
    <citation type="journal article" date="2009" name="J. Biol. Chem.">
        <title>Two endoplasmic reticulum (ER)/ER Golgi intermediate compartment-based lysine acetyltransferases post-translationally regulate BACE1 levels.</title>
        <authorList>
            <person name="Ko M.H."/>
            <person name="Puglielli L."/>
        </authorList>
    </citation>
    <scope>FUNCTION</scope>
    <scope>CATALYTIC ACTIVITY</scope>
    <scope>INTERACTION WITH BACE1</scope>
    <scope>SUBCELLULAR LOCATION</scope>
    <scope>INDUCTION BY CERAMIDES</scope>
</reference>
<reference key="7">
    <citation type="journal article" date="2010" name="J. Biol. Chem.">
        <title>Molecular identification of NAT8 as the enzyme that acetylates cysteine S-conjugates to mercapturic acids.</title>
        <authorList>
            <person name="Veiga-da-Cunha M."/>
            <person name="Tyteca D."/>
            <person name="Stroobant V."/>
            <person name="Courtoy P.J."/>
            <person name="Opperdoes F.R."/>
            <person name="Van Schaftingen E."/>
        </authorList>
    </citation>
    <scope>FUNCTION</scope>
    <scope>CATALYTIC ACTIVITY</scope>
    <scope>BIOPHYSICOCHEMICAL PROPERTIES</scope>
    <scope>SUBCELLULAR LOCATION</scope>
    <scope>PATHWAY</scope>
    <scope>CHARACTERIZATION OF VARIANTS LYS-104 AND SER-143</scope>
    <scope>MUTAGENESIS OF ARG-149</scope>
</reference>
<reference key="8">
    <citation type="journal article" date="2012" name="J. Biol. Chem.">
        <title>Biochemical inhibition of the acetyltransferases ATase1 and ATase2 reduces beta-secretase (BACE1) levels and Abeta generation.</title>
        <authorList>
            <person name="Ding Y."/>
            <person name="Ko M.H."/>
            <person name="Pehar M."/>
            <person name="Kotch F."/>
            <person name="Peters N.R."/>
            <person name="Luo Y."/>
            <person name="Salamat S.M."/>
            <person name="Puglielli L."/>
        </authorList>
    </citation>
    <scope>TISSUE SPECIFICITY</scope>
    <scope>FUNCTION</scope>
    <scope>CATALYTIC ACTIVITY</scope>
</reference>
<reference key="9">
    <citation type="journal article" date="2014" name="J. Mol. Biol.">
        <title>Post-translational regulation of CD133 by ATase1/ATase2-mediated lysine acetylation.</title>
        <authorList>
            <person name="Mak A.B."/>
            <person name="Pehar M."/>
            <person name="Nixon A.M."/>
            <person name="Williams R.A."/>
            <person name="Uetrecht A.C."/>
            <person name="Puglielli L."/>
            <person name="Moffat J."/>
        </authorList>
    </citation>
    <scope>FUNCTION</scope>
    <scope>CATALYTIC ACTIVITY</scope>
    <scope>SUBCELLULAR LOCATION</scope>
</reference>
<reference key="10">
    <citation type="journal article" date="2020" name="J. Neurochem.">
        <title>The endoplasmic reticulum acetyltransferases ATase1/NAT8B and ATase2/NAT8 are differentially regulated to adjust engagement of the secretory pathway.</title>
        <authorList>
            <person name="Rigby M.J."/>
            <person name="Ding Y."/>
            <person name="Farrugia M.A."/>
            <person name="Feig M."/>
            <person name="Cortese G.P."/>
            <person name="Mitchell H."/>
            <person name="Burger C."/>
            <person name="Puglielli L."/>
        </authorList>
    </citation>
    <scope>FUNCTION</scope>
    <scope>CATALYTIC ACTIVITY</scope>
    <scope>MUTAGENESIS OF LYS-99; ARG-149; SER-183 AND SER-190</scope>
</reference>
<evidence type="ECO:0000250" key="1">
    <source>
        <dbReference type="UniProtKB" id="Q9JIY7"/>
    </source>
</evidence>
<evidence type="ECO:0000255" key="2"/>
<evidence type="ECO:0000255" key="3">
    <source>
        <dbReference type="PROSITE-ProRule" id="PRU00532"/>
    </source>
</evidence>
<evidence type="ECO:0000269" key="4">
    <source>
    </source>
</evidence>
<evidence type="ECO:0000269" key="5">
    <source>
    </source>
</evidence>
<evidence type="ECO:0000269" key="6">
    <source>
    </source>
</evidence>
<evidence type="ECO:0000269" key="7">
    <source>
    </source>
</evidence>
<evidence type="ECO:0000269" key="8">
    <source>
    </source>
</evidence>
<evidence type="ECO:0000269" key="9">
    <source>
    </source>
</evidence>
<evidence type="ECO:0000269" key="10">
    <source>
    </source>
</evidence>
<evidence type="ECO:0000269" key="11">
    <source ref="3"/>
</evidence>
<evidence type="ECO:0000269" key="12">
    <source ref="4"/>
</evidence>
<evidence type="ECO:0000305" key="13"/>
<evidence type="ECO:0000305" key="14">
    <source>
    </source>
</evidence>
<evidence type="ECO:0000305" key="15">
    <source>
    </source>
</evidence>
<evidence type="ECO:0000312" key="16">
    <source>
        <dbReference type="EMBL" id="AAF22303.1"/>
    </source>
</evidence>
<evidence type="ECO:0000312" key="17">
    <source>
        <dbReference type="EMBL" id="AAH12626.1"/>
    </source>
</evidence>
<evidence type="ECO:0000312" key="18">
    <source>
        <dbReference type="EMBL" id="BAA33679.1"/>
    </source>
</evidence>
<evidence type="ECO:0000312" key="19">
    <source>
        <dbReference type="EMBL" id="BAA34386.1"/>
    </source>
</evidence>
<evidence type="ECO:0000312" key="20">
    <source>
        <dbReference type="HGNC" id="HGNC:18069"/>
    </source>
</evidence>
<protein>
    <recommendedName>
        <fullName>N-acetyltransferase 8</fullName>
        <ecNumber evidence="5 7 8 9">2.3.1.-</ecNumber>
    </recommendedName>
    <alternativeName>
        <fullName>Acetyltransferase 2</fullName>
        <shortName>ATase2</shortName>
    </alternativeName>
    <alternativeName>
        <fullName>Camello-like protein 1</fullName>
    </alternativeName>
    <alternativeName>
        <fullName>Cysteinyl-conjugate N-acetyltransferase</fullName>
        <shortName>CCNAT</shortName>
        <ecNumber evidence="6">2.3.1.80</ecNumber>
    </alternativeName>
    <alternativeName>
        <fullName evidence="13">Protein-lysine N6-acetyltransferase 8</fullName>
    </alternativeName>
</protein>
<name>NAT8_HUMAN</name>
<dbReference type="EC" id="2.3.1.-" evidence="5 7 8 9"/>
<dbReference type="EC" id="2.3.1.80" evidence="6"/>
<dbReference type="EMBL" id="AB013094">
    <property type="protein sequence ID" value="BAA33679.1"/>
    <property type="molecule type" value="mRNA"/>
</dbReference>
<dbReference type="EMBL" id="AF187813">
    <property type="protein sequence ID" value="AAF22303.1"/>
    <property type="molecule type" value="mRNA"/>
</dbReference>
<dbReference type="EMBL" id="AB019551">
    <property type="protein sequence ID" value="BAA34386.1"/>
    <property type="molecule type" value="mRNA"/>
</dbReference>
<dbReference type="EMBL" id="CR407610">
    <property type="protein sequence ID" value="CAG28538.1"/>
    <property type="molecule type" value="mRNA"/>
</dbReference>
<dbReference type="EMBL" id="BC012626">
    <property type="protein sequence ID" value="AAH12626.1"/>
    <property type="molecule type" value="mRNA"/>
</dbReference>
<dbReference type="CCDS" id="CCDS1926.1"/>
<dbReference type="PIR" id="T44342">
    <property type="entry name" value="T44342"/>
</dbReference>
<dbReference type="RefSeq" id="NP_003951.3">
    <property type="nucleotide sequence ID" value="NM_003960.3"/>
</dbReference>
<dbReference type="SMR" id="Q9UHE5"/>
<dbReference type="BioGRID" id="114494">
    <property type="interactions" value="30"/>
</dbReference>
<dbReference type="FunCoup" id="Q9UHE5">
    <property type="interactions" value="105"/>
</dbReference>
<dbReference type="IntAct" id="Q9UHE5">
    <property type="interactions" value="28"/>
</dbReference>
<dbReference type="STRING" id="9606.ENSP00000272425"/>
<dbReference type="iPTMnet" id="Q9UHE5"/>
<dbReference type="PhosphoSitePlus" id="Q9UHE5"/>
<dbReference type="BioMuta" id="NAT8"/>
<dbReference type="DMDM" id="145566894"/>
<dbReference type="MassIVE" id="Q9UHE5"/>
<dbReference type="PaxDb" id="9606-ENSP00000272425"/>
<dbReference type="PeptideAtlas" id="Q9UHE5"/>
<dbReference type="ProteomicsDB" id="84334"/>
<dbReference type="Antibodypedia" id="47469">
    <property type="antibodies" value="232 antibodies from 24 providers"/>
</dbReference>
<dbReference type="DNASU" id="9027"/>
<dbReference type="Ensembl" id="ENST00000272425.4">
    <property type="protein sequence ID" value="ENSP00000272425.3"/>
    <property type="gene ID" value="ENSG00000144035.4"/>
</dbReference>
<dbReference type="Ensembl" id="ENST00000707634.1">
    <property type="protein sequence ID" value="ENSP00000516938.1"/>
    <property type="gene ID" value="ENSG00000291479.1"/>
</dbReference>
<dbReference type="GeneID" id="9027"/>
<dbReference type="KEGG" id="hsa:9027"/>
<dbReference type="MANE-Select" id="ENST00000272425.4">
    <property type="protein sequence ID" value="ENSP00000272425.3"/>
    <property type="RefSeq nucleotide sequence ID" value="NM_003960.4"/>
    <property type="RefSeq protein sequence ID" value="NP_003951.3"/>
</dbReference>
<dbReference type="UCSC" id="uc002sji.2">
    <property type="organism name" value="human"/>
</dbReference>
<dbReference type="AGR" id="HGNC:18069"/>
<dbReference type="CTD" id="9027"/>
<dbReference type="DisGeNET" id="9027"/>
<dbReference type="GeneCards" id="NAT8"/>
<dbReference type="HGNC" id="HGNC:18069">
    <property type="gene designation" value="NAT8"/>
</dbReference>
<dbReference type="HPA" id="ENSG00000144035">
    <property type="expression patterns" value="Tissue enriched (kidney)"/>
</dbReference>
<dbReference type="MIM" id="606716">
    <property type="type" value="gene"/>
</dbReference>
<dbReference type="neXtProt" id="NX_Q9UHE5"/>
<dbReference type="OpenTargets" id="ENSG00000144035"/>
<dbReference type="PharmGKB" id="PA31450"/>
<dbReference type="VEuPathDB" id="HostDB:ENSG00000144035"/>
<dbReference type="eggNOG" id="KOG3139">
    <property type="taxonomic scope" value="Eukaryota"/>
</dbReference>
<dbReference type="GeneTree" id="ENSGT00950000182932"/>
<dbReference type="HOGENOM" id="CLU_013985_10_1_1"/>
<dbReference type="InParanoid" id="Q9UHE5"/>
<dbReference type="OMA" id="YVPTLCV"/>
<dbReference type="OrthoDB" id="41532at2759"/>
<dbReference type="PAN-GO" id="Q9UHE5">
    <property type="GO annotations" value="1 GO annotation based on evolutionary models"/>
</dbReference>
<dbReference type="PhylomeDB" id="Q9UHE5"/>
<dbReference type="TreeFam" id="TF324687"/>
<dbReference type="BioCyc" id="MetaCyc:ENSG00000144035-MONOMER"/>
<dbReference type="BRENDA" id="2.3.1.80">
    <property type="organism ID" value="2681"/>
</dbReference>
<dbReference type="PathwayCommons" id="Q9UHE5"/>
<dbReference type="Reactome" id="R-HSA-977225">
    <property type="pathway name" value="Amyloid fiber formation"/>
</dbReference>
<dbReference type="SignaLink" id="Q9UHE5"/>
<dbReference type="UniPathway" id="UPA00204"/>
<dbReference type="BioGRID-ORCS" id="9027">
    <property type="hits" value="15 hits in 1113 CRISPR screens"/>
</dbReference>
<dbReference type="GeneWiki" id="NAT8"/>
<dbReference type="GenomeRNAi" id="9027"/>
<dbReference type="Pharos" id="Q9UHE5">
    <property type="development level" value="Tbio"/>
</dbReference>
<dbReference type="PRO" id="PR:Q9UHE5"/>
<dbReference type="Proteomes" id="UP000005640">
    <property type="component" value="Chromosome 2"/>
</dbReference>
<dbReference type="RNAct" id="Q9UHE5">
    <property type="molecule type" value="protein"/>
</dbReference>
<dbReference type="Bgee" id="ENSG00000144035">
    <property type="expression patterns" value="Expressed in adult organism and 110 other cell types or tissues"/>
</dbReference>
<dbReference type="GO" id="GO:0005789">
    <property type="term" value="C:endoplasmic reticulum membrane"/>
    <property type="evidence" value="ECO:0000314"/>
    <property type="project" value="UniProtKB"/>
</dbReference>
<dbReference type="GO" id="GO:0005793">
    <property type="term" value="C:endoplasmic reticulum-Golgi intermediate compartment"/>
    <property type="evidence" value="ECO:0000314"/>
    <property type="project" value="UniProtKB"/>
</dbReference>
<dbReference type="GO" id="GO:0033116">
    <property type="term" value="C:endoplasmic reticulum-Golgi intermediate compartment membrane"/>
    <property type="evidence" value="ECO:0000314"/>
    <property type="project" value="UniProtKB"/>
</dbReference>
<dbReference type="GO" id="GO:0016020">
    <property type="term" value="C:membrane"/>
    <property type="evidence" value="ECO:0000314"/>
    <property type="project" value="UniProtKB"/>
</dbReference>
<dbReference type="GO" id="GO:0047198">
    <property type="term" value="F:L-cysteine-S-conjugate N-acetyltransferase activity"/>
    <property type="evidence" value="ECO:0000314"/>
    <property type="project" value="UniProtKB"/>
</dbReference>
<dbReference type="GO" id="GO:0004468">
    <property type="term" value="F:L-lysine N-acetyltransferase activity, acting on acetyl phosphate as donor"/>
    <property type="evidence" value="ECO:0000304"/>
    <property type="project" value="Reactome"/>
</dbReference>
<dbReference type="GO" id="GO:0008080">
    <property type="term" value="F:N-acetyltransferase activity"/>
    <property type="evidence" value="ECO:0000318"/>
    <property type="project" value="GO_Central"/>
</dbReference>
<dbReference type="GO" id="GO:0061733">
    <property type="term" value="F:protein-lysine-acetyltransferase activity"/>
    <property type="evidence" value="ECO:0000314"/>
    <property type="project" value="UniProtKB"/>
</dbReference>
<dbReference type="GO" id="GO:1990000">
    <property type="term" value="P:amyloid fibril formation"/>
    <property type="evidence" value="ECO:0000304"/>
    <property type="project" value="Reactome"/>
</dbReference>
<dbReference type="GO" id="GO:0006749">
    <property type="term" value="P:glutathione metabolic process"/>
    <property type="evidence" value="ECO:0007669"/>
    <property type="project" value="UniProtKB-UniPathway"/>
</dbReference>
<dbReference type="GO" id="GO:0018003">
    <property type="term" value="P:peptidyl-lysine N6-acetylation"/>
    <property type="evidence" value="ECO:0000314"/>
    <property type="project" value="UniProtKB"/>
</dbReference>
<dbReference type="GO" id="GO:0010628">
    <property type="term" value="P:positive regulation of gene expression"/>
    <property type="evidence" value="ECO:0000315"/>
    <property type="project" value="UniProtKB"/>
</dbReference>
<dbReference type="CDD" id="cd04301">
    <property type="entry name" value="NAT_SF"/>
    <property type="match status" value="1"/>
</dbReference>
<dbReference type="FunFam" id="3.40.630.30:FF:000118">
    <property type="entry name" value="N-acetyltransferase family 8 member 3"/>
    <property type="match status" value="1"/>
</dbReference>
<dbReference type="Gene3D" id="3.40.630.30">
    <property type="match status" value="1"/>
</dbReference>
<dbReference type="InterPro" id="IPR016181">
    <property type="entry name" value="Acyl_CoA_acyltransferase"/>
</dbReference>
<dbReference type="InterPro" id="IPR000182">
    <property type="entry name" value="GNAT_dom"/>
</dbReference>
<dbReference type="InterPro" id="IPR050769">
    <property type="entry name" value="NAT_camello-type"/>
</dbReference>
<dbReference type="PANTHER" id="PTHR13947">
    <property type="entry name" value="GNAT FAMILY N-ACETYLTRANSFERASE"/>
    <property type="match status" value="1"/>
</dbReference>
<dbReference type="PANTHER" id="PTHR13947:SF48">
    <property type="entry name" value="N-ACETYLTRANSFERASE 8-RELATED"/>
    <property type="match status" value="1"/>
</dbReference>
<dbReference type="Pfam" id="PF00583">
    <property type="entry name" value="Acetyltransf_1"/>
    <property type="match status" value="1"/>
</dbReference>
<dbReference type="SUPFAM" id="SSF55729">
    <property type="entry name" value="Acyl-CoA N-acyltransferases (Nat)"/>
    <property type="match status" value="1"/>
</dbReference>
<dbReference type="PROSITE" id="PS51186">
    <property type="entry name" value="GNAT"/>
    <property type="match status" value="1"/>
</dbReference>
<proteinExistence type="evidence at protein level"/>
<accession>Q9UHE5</accession>
<accession>O75839</accession>
<accession>Q6LEU4</accession>
<accession>Q96QI8</accession>
<accession>Q9UQ17</accession>
<organism>
    <name type="scientific">Homo sapiens</name>
    <name type="common">Human</name>
    <dbReference type="NCBI Taxonomy" id="9606"/>
    <lineage>
        <taxon>Eukaryota</taxon>
        <taxon>Metazoa</taxon>
        <taxon>Chordata</taxon>
        <taxon>Craniata</taxon>
        <taxon>Vertebrata</taxon>
        <taxon>Euteleostomi</taxon>
        <taxon>Mammalia</taxon>
        <taxon>Eutheria</taxon>
        <taxon>Euarchontoglires</taxon>
        <taxon>Primates</taxon>
        <taxon>Haplorrhini</taxon>
        <taxon>Catarrhini</taxon>
        <taxon>Hominidae</taxon>
        <taxon>Homo</taxon>
    </lineage>
</organism>
<gene>
    <name evidence="20" type="primary">NAT8</name>
    <name evidence="16" type="synonym">CML1</name>
    <name evidence="19" type="synonym">GLA</name>
    <name evidence="18" type="synonym">TSC501</name>
</gene>
<comment type="function">
    <text evidence="1 5 6 7 8 9">Endoplasmic reticulum (ER)-membrane-bound lysine N-acetyltransferase catalyzing the N6-acetylation of lysine residues in the lumen of the ER in various proteins, including PROM1 and BACE1, using acetyl-CoA as acetyl donor (PubMed:19011241, PubMed:22267734, PubMed:24556617, PubMed:31945187). Thereby, may regulate apoptosis through the acetylation and the regulation of the expression of PROM1 (PubMed:24556617). May also regulate amyloid beta-peptide secretion through acetylation of BACE1 and the regulation of its expression in neurons (PubMed:19011241). N(6)-lysine acetylation in the ER maintains protein homeostasis and regulates reticulophagy (By similarity). Alternatively, acetylates the free alpha-amino group of cysteine S-conjugates to form mercapturic acids (PubMed:20392701). This is the final step in a major route for detoxification of a wide variety of reactive electrophiles which starts with their incorporation into glutathione S-conjugates. The glutathione S-conjugates are then further processed into cysteine S-conjugates and finally mercapturic acids which are water soluble and can be readily excreted in urine or bile.</text>
</comment>
<comment type="catalytic activity">
    <reaction evidence="5 7 8 9">
        <text>L-lysyl-[protein] + acetyl-CoA = N(6)-acetyl-L-lysyl-[protein] + CoA + H(+)</text>
        <dbReference type="Rhea" id="RHEA:45948"/>
        <dbReference type="Rhea" id="RHEA-COMP:9752"/>
        <dbReference type="Rhea" id="RHEA-COMP:10731"/>
        <dbReference type="ChEBI" id="CHEBI:15378"/>
        <dbReference type="ChEBI" id="CHEBI:29969"/>
        <dbReference type="ChEBI" id="CHEBI:57287"/>
        <dbReference type="ChEBI" id="CHEBI:57288"/>
        <dbReference type="ChEBI" id="CHEBI:61930"/>
    </reaction>
    <physiologicalReaction direction="left-to-right" evidence="14">
        <dbReference type="Rhea" id="RHEA:45949"/>
    </physiologicalReaction>
</comment>
<comment type="catalytic activity">
    <reaction evidence="6">
        <text>an S-substituted L-cysteine + acetyl-CoA = an N-acetyl-L-cysteine-S-conjugate + CoA + H(+)</text>
        <dbReference type="Rhea" id="RHEA:19213"/>
        <dbReference type="ChEBI" id="CHEBI:15378"/>
        <dbReference type="ChEBI" id="CHEBI:57287"/>
        <dbReference type="ChEBI" id="CHEBI:57288"/>
        <dbReference type="ChEBI" id="CHEBI:58717"/>
        <dbReference type="ChEBI" id="CHEBI:58718"/>
        <dbReference type="EC" id="2.3.1.80"/>
    </reaction>
    <physiologicalReaction direction="left-to-right" evidence="15">
        <dbReference type="Rhea" id="RHEA:19214"/>
    </physiologicalReaction>
</comment>
<comment type="biophysicochemical properties">
    <kinetics>
        <KM evidence="6">64 uM for S-benzyl-L-cysteine (at 37 degrees Celsius)</KM>
        <KM evidence="6">23 uM for acetyl-CoA (at 37 degrees Celsius)</KM>
        <Vmax evidence="6">4.4 nmol/min/mg enzyme toward S-benzyl-L-cysteine</Vmax>
        <Vmax evidence="6">3.1 nmol/min/mg enzyme toward acetyl-CoA (with S-substituted L-cysteine as substrate)</Vmax>
    </kinetics>
</comment>
<comment type="pathway">
    <text evidence="6">Sulfur metabolism; glutathione metabolism.</text>
</comment>
<comment type="interaction">
    <interactant intactId="EBI-2863634">
        <id>Q9UHE5</id>
    </interactant>
    <interactant intactId="EBI-11343438">
        <id>Q3SXY8</id>
        <label>ARL13B</label>
    </interactant>
    <organismsDiffer>false</organismsDiffer>
    <experiments>3</experiments>
</comment>
<comment type="interaction">
    <interactant intactId="EBI-2863634">
        <id>Q9UHE5</id>
    </interactant>
    <interactant intactId="EBI-12935759">
        <id>O15342</id>
        <label>ATP6V0E1</label>
    </interactant>
    <organismsDiffer>false</organismsDiffer>
    <experiments>3</experiments>
</comment>
<comment type="interaction">
    <interactant intactId="EBI-2863634">
        <id>Q9UHE5</id>
    </interactant>
    <interactant intactId="EBI-700794">
        <id>Q13323</id>
        <label>BIK</label>
    </interactant>
    <organismsDiffer>false</organismsDiffer>
    <experiments>3</experiments>
</comment>
<comment type="interaction">
    <interactant intactId="EBI-2863634">
        <id>Q9UHE5</id>
    </interactant>
    <interactant intactId="EBI-7797864">
        <id>P11912</id>
        <label>CD79A</label>
    </interactant>
    <organismsDiffer>false</organismsDiffer>
    <experiments>3</experiments>
</comment>
<comment type="interaction">
    <interactant intactId="EBI-2863634">
        <id>Q9UHE5</id>
    </interactant>
    <interactant intactId="EBI-2622997">
        <id>Q9HA82</id>
        <label>CERS4</label>
    </interactant>
    <organismsDiffer>false</organismsDiffer>
    <experiments>3</experiments>
</comment>
<comment type="interaction">
    <interactant intactId="EBI-2863634">
        <id>Q9UHE5</id>
    </interactant>
    <interactant intactId="EBI-6942903">
        <id>Q96BA8</id>
        <label>CREB3L1</label>
    </interactant>
    <organismsDiffer>false</organismsDiffer>
    <experiments>3</experiments>
</comment>
<comment type="interaction">
    <interactant intactId="EBI-2863634">
        <id>Q9UHE5</id>
    </interactant>
    <interactant intactId="EBI-3915253">
        <id>Q15125</id>
        <label>EBP</label>
    </interactant>
    <organismsDiffer>false</organismsDiffer>
    <experiments>3</experiments>
</comment>
<comment type="interaction">
    <interactant intactId="EBI-2863634">
        <id>Q9UHE5</id>
    </interactant>
    <interactant intactId="EBI-18304435">
        <id>Q5JX71</id>
        <label>FAM209A</label>
    </interactant>
    <organismsDiffer>false</organismsDiffer>
    <experiments>3</experiments>
</comment>
<comment type="interaction">
    <interactant intactId="EBI-2863634">
        <id>Q9UHE5</id>
    </interactant>
    <interactant intactId="EBI-2833872">
        <id>O15552</id>
        <label>FFAR2</label>
    </interactant>
    <organismsDiffer>false</organismsDiffer>
    <experiments>3</experiments>
</comment>
<comment type="interaction">
    <interactant intactId="EBI-2863634">
        <id>Q9UHE5</id>
    </interactant>
    <interactant intactId="EBI-17231387">
        <id>Q6ZVE7</id>
        <label>GOLT1A</label>
    </interactant>
    <organismsDiffer>false</organismsDiffer>
    <experiments>3</experiments>
</comment>
<comment type="interaction">
    <interactant intactId="EBI-2863634">
        <id>Q9UHE5</id>
    </interactant>
    <interactant intactId="EBI-13345167">
        <id>Q8TDT2</id>
        <label>GPR152</label>
    </interactant>
    <organismsDiffer>false</organismsDiffer>
    <experiments>3</experiments>
</comment>
<comment type="interaction">
    <interactant intactId="EBI-2863634">
        <id>Q9UHE5</id>
    </interactant>
    <interactant intactId="EBI-18053395">
        <id>Q7Z5P4</id>
        <label>HSD17B13</label>
    </interactant>
    <organismsDiffer>false</organismsDiffer>
    <experiments>3</experiments>
</comment>
<comment type="interaction">
    <interactant intactId="EBI-2863634">
        <id>Q9UHE5</id>
    </interactant>
    <interactant intactId="EBI-465137">
        <id>Q9HDC5</id>
        <label>JPH1</label>
    </interactant>
    <organismsDiffer>false</organismsDiffer>
    <experiments>3</experiments>
</comment>
<comment type="interaction">
    <interactant intactId="EBI-2863634">
        <id>Q9UHE5</id>
    </interactant>
    <interactant intactId="EBI-750776">
        <id>O95214</id>
        <label>LEPROTL1</label>
    </interactant>
    <organismsDiffer>false</organismsDiffer>
    <experiments>3</experiments>
</comment>
<comment type="interaction">
    <interactant intactId="EBI-2863634">
        <id>Q9UHE5</id>
    </interactant>
    <interactant intactId="EBI-373355">
        <id>Q5SR56</id>
        <label>MFSD14B</label>
    </interactant>
    <organismsDiffer>false</organismsDiffer>
    <experiments>3</experiments>
</comment>
<comment type="interaction">
    <interactant intactId="EBI-2863634">
        <id>Q9UHE5</id>
    </interactant>
    <interactant intactId="EBI-3923617">
        <id>Q9H2K0</id>
        <label>MTIF3</label>
    </interactant>
    <organismsDiffer>false</organismsDiffer>
    <experiments>3</experiments>
</comment>
<comment type="interaction">
    <interactant intactId="EBI-2863634">
        <id>Q9UHE5</id>
    </interactant>
    <interactant intactId="EBI-11337973">
        <id>Q9BRK0</id>
        <label>REEP2</label>
    </interactant>
    <organismsDiffer>false</organismsDiffer>
    <experiments>3</experiments>
</comment>
<comment type="interaction">
    <interactant intactId="EBI-2863634">
        <id>Q9UHE5</id>
    </interactant>
    <interactant intactId="EBI-3920694">
        <id>Q9NR31</id>
        <label>SAR1A</label>
    </interactant>
    <organismsDiffer>false</organismsDiffer>
    <experiments>3</experiments>
</comment>
<comment type="interaction">
    <interactant intactId="EBI-2863634">
        <id>Q9UHE5</id>
    </interactant>
    <interactant intactId="EBI-18159983">
        <id>Q3KNW5</id>
        <label>SLC10A6</label>
    </interactant>
    <organismsDiffer>false</organismsDiffer>
    <experiments>3</experiments>
</comment>
<comment type="interaction">
    <interactant intactId="EBI-2863634">
        <id>Q9UHE5</id>
    </interactant>
    <interactant intactId="EBI-12947623">
        <id>Q96MV1</id>
        <label>TLCD4</label>
    </interactant>
    <organismsDiffer>false</organismsDiffer>
    <experiments>3</experiments>
</comment>
<comment type="interaction">
    <interactant intactId="EBI-2863634">
        <id>Q9UHE5</id>
    </interactant>
    <interactant intactId="EBI-13342951">
        <id>Q96AN5</id>
        <label>TMEM143</label>
    </interactant>
    <organismsDiffer>false</organismsDiffer>
    <experiments>3</experiments>
</comment>
<comment type="interaction">
    <interactant intactId="EBI-2863634">
        <id>Q9UHE5</id>
    </interactant>
    <interactant intactId="EBI-8638294">
        <id>Q9NUH8</id>
        <label>TMEM14B</label>
    </interactant>
    <organismsDiffer>false</organismsDiffer>
    <experiments>3</experiments>
</comment>
<comment type="interaction">
    <interactant intactId="EBI-2863634">
        <id>Q9UHE5</id>
    </interactant>
    <interactant intactId="EBI-6447886">
        <id>Q9Y320</id>
        <label>TMX2</label>
    </interactant>
    <organismsDiffer>false</organismsDiffer>
    <experiments>3</experiments>
</comment>
<comment type="interaction">
    <interactant intactId="EBI-2863634">
        <id>Q9UHE5</id>
    </interactant>
    <interactant intactId="EBI-17678331">
        <id>Q12999</id>
        <label>TSPAN31</label>
    </interactant>
    <organismsDiffer>false</organismsDiffer>
    <experiments>3</experiments>
</comment>
<comment type="interaction">
    <interactant intactId="EBI-2863634">
        <id>Q9UHE5</id>
    </interactant>
    <interactant intactId="EBI-751253">
        <id>Q9BSR8</id>
        <label>YIPF4</label>
    </interactant>
    <organismsDiffer>false</organismsDiffer>
    <experiments>3</experiments>
</comment>
<comment type="subcellular location">
    <subcellularLocation>
        <location evidence="5 8">Endoplasmic reticulum-Golgi intermediate compartment membrane</location>
        <topology evidence="14">Single-pass type II membrane protein</topology>
    </subcellularLocation>
    <subcellularLocation>
        <location evidence="6">Endoplasmic reticulum membrane</location>
        <topology evidence="14">Single-pass type II membrane protein</topology>
    </subcellularLocation>
</comment>
<comment type="tissue specificity">
    <text evidence="7 10">Preferentially expressed in liver and kidney. Also detected in brain (at protein level).</text>
</comment>
<comment type="induction">
    <text evidence="5">Up-regulated by ceramides.</text>
</comment>
<comment type="similarity">
    <text evidence="13">Belongs to the NAT8 family.</text>
</comment>